<reference key="1">
    <citation type="journal article" date="2007" name="J. Bacteriol.">
        <title>The complete genome sequence of Bacillus thuringiensis Al Hakam.</title>
        <authorList>
            <person name="Challacombe J.F."/>
            <person name="Altherr M.R."/>
            <person name="Xie G."/>
            <person name="Bhotika S.S."/>
            <person name="Brown N."/>
            <person name="Bruce D."/>
            <person name="Campbell C.S."/>
            <person name="Campbell M.L."/>
            <person name="Chen J."/>
            <person name="Chertkov O."/>
            <person name="Cleland C."/>
            <person name="Dimitrijevic M."/>
            <person name="Doggett N.A."/>
            <person name="Fawcett J.J."/>
            <person name="Glavina T."/>
            <person name="Goodwin L.A."/>
            <person name="Green L.D."/>
            <person name="Han C.S."/>
            <person name="Hill K.K."/>
            <person name="Hitchcock P."/>
            <person name="Jackson P.J."/>
            <person name="Keim P."/>
            <person name="Kewalramani A.R."/>
            <person name="Longmire J."/>
            <person name="Lucas S."/>
            <person name="Malfatti S."/>
            <person name="Martinez D."/>
            <person name="McMurry K."/>
            <person name="Meincke L.J."/>
            <person name="Misra M."/>
            <person name="Moseman B.L."/>
            <person name="Mundt M."/>
            <person name="Munk A.C."/>
            <person name="Okinaka R.T."/>
            <person name="Parson-Quintana B."/>
            <person name="Reilly L.P."/>
            <person name="Richardson P."/>
            <person name="Robinson D.L."/>
            <person name="Saunders E."/>
            <person name="Tapia R."/>
            <person name="Tesmer J.G."/>
            <person name="Thayer N."/>
            <person name="Thompson L.S."/>
            <person name="Tice H."/>
            <person name="Ticknor L.O."/>
            <person name="Wills P.L."/>
            <person name="Gilna P."/>
            <person name="Brettin T.S."/>
        </authorList>
    </citation>
    <scope>NUCLEOTIDE SEQUENCE [LARGE SCALE GENOMIC DNA]</scope>
    <source>
        <strain>Al Hakam</strain>
    </source>
</reference>
<evidence type="ECO:0000255" key="1">
    <source>
        <dbReference type="HAMAP-Rule" id="MF_00303"/>
    </source>
</evidence>
<protein>
    <recommendedName>
        <fullName evidence="1">Trigger factor</fullName>
        <shortName evidence="1">TF</shortName>
        <ecNumber evidence="1">5.2.1.8</ecNumber>
    </recommendedName>
    <alternativeName>
        <fullName evidence="1">PPIase</fullName>
    </alternativeName>
</protein>
<feature type="chain" id="PRO_1000022645" description="Trigger factor">
    <location>
        <begin position="1"/>
        <end position="425"/>
    </location>
</feature>
<feature type="domain" description="PPIase FKBP-type" evidence="1">
    <location>
        <begin position="163"/>
        <end position="248"/>
    </location>
</feature>
<proteinExistence type="inferred from homology"/>
<comment type="function">
    <text evidence="1">Involved in protein export. Acts as a chaperone by maintaining the newly synthesized protein in an open conformation. Functions as a peptidyl-prolyl cis-trans isomerase.</text>
</comment>
<comment type="catalytic activity">
    <reaction evidence="1">
        <text>[protein]-peptidylproline (omega=180) = [protein]-peptidylproline (omega=0)</text>
        <dbReference type="Rhea" id="RHEA:16237"/>
        <dbReference type="Rhea" id="RHEA-COMP:10747"/>
        <dbReference type="Rhea" id="RHEA-COMP:10748"/>
        <dbReference type="ChEBI" id="CHEBI:83833"/>
        <dbReference type="ChEBI" id="CHEBI:83834"/>
        <dbReference type="EC" id="5.2.1.8"/>
    </reaction>
</comment>
<comment type="subcellular location">
    <subcellularLocation>
        <location>Cytoplasm</location>
    </subcellularLocation>
    <text evidence="1">About half TF is bound to the ribosome near the polypeptide exit tunnel while the other half is free in the cytoplasm.</text>
</comment>
<comment type="domain">
    <text evidence="1">Consists of 3 domains; the N-terminus binds the ribosome, the middle domain has PPIase activity, while the C-terminus has intrinsic chaperone activity on its own.</text>
</comment>
<comment type="similarity">
    <text evidence="1">Belongs to the FKBP-type PPIase family. Tig subfamily.</text>
</comment>
<gene>
    <name evidence="1" type="primary">tig</name>
    <name type="ordered locus">BALH_4066</name>
</gene>
<sequence length="425" mass="47214">MAAKWEKLEGNVGVLTIEVDAKEVNNSIDAAFKKVVKTINVPGFRKGKMPRPLFEQRFGIESLYQDALDIILPKAYGEAIDEAGIFPVAHPEIDIEKFEKNANLIFTAKVTVKPEVKLGEYKGLAVEKVETTVTDEDVENELKSLQERQAELVVKEEGTVENGDTAVIDFEGFVDGEAFEGGKGENYSLAIGSGTFIPGFEEQVIGLKSGESKDVEVSFPEEYHAAELAGKPATFKVTVHEIKTKELPELNDEFAKEADEAVATLDELKAKLRTNLEEGKKHEAEHKVRDEVVELAAANAEIDIPEAMIDTELDRMVREFEQRLSQQGMNLELYYQFTGTDADKLKEQMKEDAQKRVRINLVLEAIIEAENIEVTEEEVTAEVEKMAEMYGMPVDAIKQALGSVDALAEDLKVRKAVDFLVENAA</sequence>
<keyword id="KW-0131">Cell cycle</keyword>
<keyword id="KW-0132">Cell division</keyword>
<keyword id="KW-0143">Chaperone</keyword>
<keyword id="KW-0963">Cytoplasm</keyword>
<keyword id="KW-0413">Isomerase</keyword>
<keyword id="KW-0697">Rotamase</keyword>
<accession>A0RJ90</accession>
<dbReference type="EC" id="5.2.1.8" evidence="1"/>
<dbReference type="EMBL" id="CP000485">
    <property type="protein sequence ID" value="ABK87283.1"/>
    <property type="molecule type" value="Genomic_DNA"/>
</dbReference>
<dbReference type="RefSeq" id="WP_000729253.1">
    <property type="nucleotide sequence ID" value="NC_008600.1"/>
</dbReference>
<dbReference type="SMR" id="A0RJ90"/>
<dbReference type="GeneID" id="45024345"/>
<dbReference type="KEGG" id="btl:BALH_4066"/>
<dbReference type="HOGENOM" id="CLU_033058_3_2_9"/>
<dbReference type="GO" id="GO:0005737">
    <property type="term" value="C:cytoplasm"/>
    <property type="evidence" value="ECO:0007669"/>
    <property type="project" value="UniProtKB-SubCell"/>
</dbReference>
<dbReference type="GO" id="GO:0003755">
    <property type="term" value="F:peptidyl-prolyl cis-trans isomerase activity"/>
    <property type="evidence" value="ECO:0007669"/>
    <property type="project" value="UniProtKB-UniRule"/>
</dbReference>
<dbReference type="GO" id="GO:0044183">
    <property type="term" value="F:protein folding chaperone"/>
    <property type="evidence" value="ECO:0007669"/>
    <property type="project" value="TreeGrafter"/>
</dbReference>
<dbReference type="GO" id="GO:0043022">
    <property type="term" value="F:ribosome binding"/>
    <property type="evidence" value="ECO:0007669"/>
    <property type="project" value="TreeGrafter"/>
</dbReference>
<dbReference type="GO" id="GO:0051083">
    <property type="term" value="P:'de novo' cotranslational protein folding"/>
    <property type="evidence" value="ECO:0007669"/>
    <property type="project" value="TreeGrafter"/>
</dbReference>
<dbReference type="GO" id="GO:0051301">
    <property type="term" value="P:cell division"/>
    <property type="evidence" value="ECO:0007669"/>
    <property type="project" value="UniProtKB-KW"/>
</dbReference>
<dbReference type="GO" id="GO:0061077">
    <property type="term" value="P:chaperone-mediated protein folding"/>
    <property type="evidence" value="ECO:0007669"/>
    <property type="project" value="TreeGrafter"/>
</dbReference>
<dbReference type="GO" id="GO:0015031">
    <property type="term" value="P:protein transport"/>
    <property type="evidence" value="ECO:0007669"/>
    <property type="project" value="UniProtKB-UniRule"/>
</dbReference>
<dbReference type="GO" id="GO:0043335">
    <property type="term" value="P:protein unfolding"/>
    <property type="evidence" value="ECO:0007669"/>
    <property type="project" value="TreeGrafter"/>
</dbReference>
<dbReference type="FunFam" id="3.10.50.40:FF:000001">
    <property type="entry name" value="Trigger factor"/>
    <property type="match status" value="1"/>
</dbReference>
<dbReference type="FunFam" id="3.30.70.1050:FF:000002">
    <property type="entry name" value="Trigger factor"/>
    <property type="match status" value="1"/>
</dbReference>
<dbReference type="Gene3D" id="3.10.50.40">
    <property type="match status" value="1"/>
</dbReference>
<dbReference type="Gene3D" id="3.30.70.1050">
    <property type="entry name" value="Trigger factor ribosome-binding domain"/>
    <property type="match status" value="1"/>
</dbReference>
<dbReference type="Gene3D" id="1.10.3120.10">
    <property type="entry name" value="Trigger factor, C-terminal domain"/>
    <property type="match status" value="1"/>
</dbReference>
<dbReference type="HAMAP" id="MF_00303">
    <property type="entry name" value="Trigger_factor_Tig"/>
    <property type="match status" value="1"/>
</dbReference>
<dbReference type="InterPro" id="IPR046357">
    <property type="entry name" value="PPIase_dom_sf"/>
</dbReference>
<dbReference type="InterPro" id="IPR001179">
    <property type="entry name" value="PPIase_FKBP_dom"/>
</dbReference>
<dbReference type="InterPro" id="IPR005215">
    <property type="entry name" value="Trig_fac"/>
</dbReference>
<dbReference type="InterPro" id="IPR008880">
    <property type="entry name" value="Trigger_fac_C"/>
</dbReference>
<dbReference type="InterPro" id="IPR037041">
    <property type="entry name" value="Trigger_fac_C_sf"/>
</dbReference>
<dbReference type="InterPro" id="IPR008881">
    <property type="entry name" value="Trigger_fac_ribosome-bd_bac"/>
</dbReference>
<dbReference type="InterPro" id="IPR036611">
    <property type="entry name" value="Trigger_fac_ribosome-bd_sf"/>
</dbReference>
<dbReference type="InterPro" id="IPR027304">
    <property type="entry name" value="Trigger_fact/SurA_dom_sf"/>
</dbReference>
<dbReference type="NCBIfam" id="TIGR00115">
    <property type="entry name" value="tig"/>
    <property type="match status" value="1"/>
</dbReference>
<dbReference type="PANTHER" id="PTHR30560">
    <property type="entry name" value="TRIGGER FACTOR CHAPERONE AND PEPTIDYL-PROLYL CIS/TRANS ISOMERASE"/>
    <property type="match status" value="1"/>
</dbReference>
<dbReference type="PANTHER" id="PTHR30560:SF3">
    <property type="entry name" value="TRIGGER FACTOR-LIKE PROTEIN TIG, CHLOROPLASTIC"/>
    <property type="match status" value="1"/>
</dbReference>
<dbReference type="Pfam" id="PF00254">
    <property type="entry name" value="FKBP_C"/>
    <property type="match status" value="1"/>
</dbReference>
<dbReference type="Pfam" id="PF05698">
    <property type="entry name" value="Trigger_C"/>
    <property type="match status" value="1"/>
</dbReference>
<dbReference type="Pfam" id="PF05697">
    <property type="entry name" value="Trigger_N"/>
    <property type="match status" value="1"/>
</dbReference>
<dbReference type="PIRSF" id="PIRSF003095">
    <property type="entry name" value="Trigger_factor"/>
    <property type="match status" value="1"/>
</dbReference>
<dbReference type="SUPFAM" id="SSF54534">
    <property type="entry name" value="FKBP-like"/>
    <property type="match status" value="1"/>
</dbReference>
<dbReference type="SUPFAM" id="SSF109998">
    <property type="entry name" value="Triger factor/SurA peptide-binding domain-like"/>
    <property type="match status" value="1"/>
</dbReference>
<dbReference type="SUPFAM" id="SSF102735">
    <property type="entry name" value="Trigger factor ribosome-binding domain"/>
    <property type="match status" value="1"/>
</dbReference>
<dbReference type="PROSITE" id="PS50059">
    <property type="entry name" value="FKBP_PPIASE"/>
    <property type="match status" value="1"/>
</dbReference>
<name>TIG_BACAH</name>
<organism>
    <name type="scientific">Bacillus thuringiensis (strain Al Hakam)</name>
    <dbReference type="NCBI Taxonomy" id="412694"/>
    <lineage>
        <taxon>Bacteria</taxon>
        <taxon>Bacillati</taxon>
        <taxon>Bacillota</taxon>
        <taxon>Bacilli</taxon>
        <taxon>Bacillales</taxon>
        <taxon>Bacillaceae</taxon>
        <taxon>Bacillus</taxon>
        <taxon>Bacillus cereus group</taxon>
    </lineage>
</organism>